<comment type="function">
    <text evidence="1">E1 component of the 2-oxoglutarate dehydrogenase (OGDH) complex which catalyzes the decarboxylation of 2-oxoglutarate, the first step in the conversion of 2-oxoglutarate to succinyl-CoA and CO(2).</text>
</comment>
<comment type="catalytic activity">
    <reaction evidence="1">
        <text>N(6)-[(R)-lipoyl]-L-lysyl-[protein] + 2-oxoglutarate + H(+) = N(6)-[(R)-S(8)-succinyldihydrolipoyl]-L-lysyl-[protein] + CO2</text>
        <dbReference type="Rhea" id="RHEA:12188"/>
        <dbReference type="Rhea" id="RHEA-COMP:10474"/>
        <dbReference type="Rhea" id="RHEA-COMP:20092"/>
        <dbReference type="ChEBI" id="CHEBI:15378"/>
        <dbReference type="ChEBI" id="CHEBI:16526"/>
        <dbReference type="ChEBI" id="CHEBI:16810"/>
        <dbReference type="ChEBI" id="CHEBI:83099"/>
        <dbReference type="ChEBI" id="CHEBI:83120"/>
        <dbReference type="EC" id="1.2.4.2"/>
    </reaction>
</comment>
<comment type="cofactor">
    <cofactor evidence="1">
        <name>thiamine diphosphate</name>
        <dbReference type="ChEBI" id="CHEBI:58937"/>
    </cofactor>
</comment>
<comment type="subunit">
    <text evidence="1">Homodimer. Part of the 2-oxoglutarate dehydrogenase (OGDH) complex composed of E1 (2-oxoglutarate dehydrogenase), E2 (dihydrolipoamide succinyltransferase) and E3 (dihydrolipoamide dehydrogenase); the complex contains multiple copies of the three enzymatic components (E1, E2 and E3).</text>
</comment>
<comment type="similarity">
    <text evidence="1">Belongs to the alpha-ketoglutarate dehydrogenase family.</text>
</comment>
<sequence>MAKQEQAPGRANDVFALTSFLYGGNADYIEELYAKYEDDPNSVDPQWRDFFAKLGDNADDVKKNAEGPSWTRKNWPIAANGELVSALDGNWAEVEKHVTDKLKGKAAKGEAKGAAGTPLTAEEITQAARDSVRAIMMIRAYRMRGHLHANLDPLGLAEKPNDYNELEPENYGFTPADYNRKIFIDNVLGLEYATVPEMLDILKRTYCGAIGVEFMHISDPAEKAWIQERIEGPDKKVAFTPEGKMAILSKLIEAEGFEQFIDVKYKGTKRFGLDGGESLIPALEQIVKRGGQMGLKEVVLGMAHRGRLNVLSQVMGKPHRAIFHEFKGGSYTPDDVEGSGDVKYHLGASSDREFDGNKVHLSLTANPSHLEIVNPVVMGKARAKQDLLVGRTRDDMVPLSERAKVLPLLLHGDAAFAGQGVVAECLGLSGLKGHRVAGTLHFIINNQIGFTTNPAFSRSSPYPSDVAKMIEAPIFHVNGDDPEAVVFAAKVATEFRMTFHKPVVIDMFCYRRFGHNEGDEPSFTQPLMYKAIRAHKTTVQLYGEKLIAEGLVTQDDIDRMKADWRQKLEGEFEAGQSYKPNKADWLDGAWAGLRTADNADEQRCGKTAVPVKTLKEIGKKLVEVPKDFHVHRTIQRFLDNRAKMMETGEGIDWATAESLAFGSLAVEGHPIRLSGQDVERGTFSQRHTVLYDQENQNRYIPLNNLQKGQAIYEAINSMLSEEAVLGYEYGYSLSDPRALVLWEAQFGDFANGAQVVFDQFISSGERKWLRMSGLVCLLPHGFEGQGPEHSSARLERYLQLCAEDNMQVANVTTPANYFHILRRQMKRDFRKPLIMMTPKSLLRHKRAISTLAELSGESSFHRLLWDDAQYNKDEGIKLQKDAKIRRVVLCSGKVYYDLYEEREKRGIDDVYLLRVEQLYPFPAKALINELSRFRHAEMVWCQEEPKNMGAWSFIDPYLEWVLAHIDAKHQRVRYAGRPAAASPATGLMSKHLAQLAAFLEDALG</sequence>
<proteinExistence type="inferred from homology"/>
<gene>
    <name evidence="1" type="primary">sucA</name>
    <name evidence="1" type="synonym">odhA</name>
    <name type="ordered locus">BOV_1852</name>
</gene>
<name>ODO1_BRUO2</name>
<protein>
    <recommendedName>
        <fullName evidence="1">2-oxoglutarate dehydrogenase E1 component</fullName>
        <ecNumber evidence="1">1.2.4.2</ecNumber>
    </recommendedName>
    <alternativeName>
        <fullName evidence="1">Alpha-ketoglutarate dehydrogenase</fullName>
    </alternativeName>
</protein>
<evidence type="ECO:0000255" key="1">
    <source>
        <dbReference type="HAMAP-Rule" id="MF_01169"/>
    </source>
</evidence>
<keyword id="KW-0324">Glycolysis</keyword>
<keyword id="KW-0560">Oxidoreductase</keyword>
<keyword id="KW-0786">Thiamine pyrophosphate</keyword>
<accession>A5VSQ0</accession>
<dbReference type="EC" id="1.2.4.2" evidence="1"/>
<dbReference type="EMBL" id="CP000708">
    <property type="protein sequence ID" value="ABQ60359.1"/>
    <property type="molecule type" value="Genomic_DNA"/>
</dbReference>
<dbReference type="RefSeq" id="WP_006014251.1">
    <property type="nucleotide sequence ID" value="NC_009505.1"/>
</dbReference>
<dbReference type="SMR" id="A5VSQ0"/>
<dbReference type="GeneID" id="45125197"/>
<dbReference type="KEGG" id="bov:BOV_1852"/>
<dbReference type="HOGENOM" id="CLU_004709_1_0_5"/>
<dbReference type="PhylomeDB" id="A5VSQ0"/>
<dbReference type="Proteomes" id="UP000006383">
    <property type="component" value="Chromosome I"/>
</dbReference>
<dbReference type="GO" id="GO:0005829">
    <property type="term" value="C:cytosol"/>
    <property type="evidence" value="ECO:0007669"/>
    <property type="project" value="TreeGrafter"/>
</dbReference>
<dbReference type="GO" id="GO:0045252">
    <property type="term" value="C:oxoglutarate dehydrogenase complex"/>
    <property type="evidence" value="ECO:0007669"/>
    <property type="project" value="TreeGrafter"/>
</dbReference>
<dbReference type="GO" id="GO:0004591">
    <property type="term" value="F:oxoglutarate dehydrogenase (succinyl-transferring) activity"/>
    <property type="evidence" value="ECO:0007669"/>
    <property type="project" value="UniProtKB-UniRule"/>
</dbReference>
<dbReference type="GO" id="GO:0030976">
    <property type="term" value="F:thiamine pyrophosphate binding"/>
    <property type="evidence" value="ECO:0007669"/>
    <property type="project" value="UniProtKB-UniRule"/>
</dbReference>
<dbReference type="GO" id="GO:0006096">
    <property type="term" value="P:glycolytic process"/>
    <property type="evidence" value="ECO:0007669"/>
    <property type="project" value="UniProtKB-UniRule"/>
</dbReference>
<dbReference type="GO" id="GO:0006099">
    <property type="term" value="P:tricarboxylic acid cycle"/>
    <property type="evidence" value="ECO:0007669"/>
    <property type="project" value="TreeGrafter"/>
</dbReference>
<dbReference type="CDD" id="cd02016">
    <property type="entry name" value="TPP_E1_OGDC_like"/>
    <property type="match status" value="1"/>
</dbReference>
<dbReference type="FunFam" id="3.40.50.12470:FF:000003">
    <property type="entry name" value="2-oxoglutarate dehydrogenase E1 component"/>
    <property type="match status" value="1"/>
</dbReference>
<dbReference type="Gene3D" id="3.40.50.12470">
    <property type="match status" value="1"/>
</dbReference>
<dbReference type="Gene3D" id="3.40.50.970">
    <property type="match status" value="1"/>
</dbReference>
<dbReference type="Gene3D" id="3.40.50.11610">
    <property type="entry name" value="Multifunctional 2-oxoglutarate metabolism enzyme, C-terminal domain"/>
    <property type="match status" value="1"/>
</dbReference>
<dbReference type="Gene3D" id="1.10.287.1150">
    <property type="entry name" value="TPP helical domain"/>
    <property type="match status" value="1"/>
</dbReference>
<dbReference type="HAMAP" id="MF_01169">
    <property type="entry name" value="SucA_OdhA"/>
    <property type="match status" value="1"/>
</dbReference>
<dbReference type="InterPro" id="IPR032106">
    <property type="entry name" value="2-oxogl_dehyd_N"/>
</dbReference>
<dbReference type="InterPro" id="IPR011603">
    <property type="entry name" value="2oxoglutarate_DH_E1"/>
</dbReference>
<dbReference type="InterPro" id="IPR023784">
    <property type="entry name" value="2oxoglutarate_DH_E1_bac"/>
</dbReference>
<dbReference type="InterPro" id="IPR001017">
    <property type="entry name" value="DH_E1"/>
</dbReference>
<dbReference type="InterPro" id="IPR042179">
    <property type="entry name" value="KGD_C_sf"/>
</dbReference>
<dbReference type="InterPro" id="IPR031717">
    <property type="entry name" value="ODO-1/KGD_C"/>
</dbReference>
<dbReference type="InterPro" id="IPR029061">
    <property type="entry name" value="THDP-binding"/>
</dbReference>
<dbReference type="InterPro" id="IPR005475">
    <property type="entry name" value="Transketolase-like_Pyr-bd"/>
</dbReference>
<dbReference type="NCBIfam" id="TIGR00239">
    <property type="entry name" value="2oxo_dh_E1"/>
    <property type="match status" value="1"/>
</dbReference>
<dbReference type="NCBIfam" id="NF006914">
    <property type="entry name" value="PRK09404.1"/>
    <property type="match status" value="1"/>
</dbReference>
<dbReference type="NCBIfam" id="NF008907">
    <property type="entry name" value="PRK12270.1"/>
    <property type="match status" value="1"/>
</dbReference>
<dbReference type="PANTHER" id="PTHR23152:SF4">
    <property type="entry name" value="2-OXOADIPATE DEHYDROGENASE COMPLEX COMPONENT E1"/>
    <property type="match status" value="1"/>
</dbReference>
<dbReference type="PANTHER" id="PTHR23152">
    <property type="entry name" value="2-OXOGLUTARATE DEHYDROGENASE"/>
    <property type="match status" value="1"/>
</dbReference>
<dbReference type="Pfam" id="PF16078">
    <property type="entry name" value="2-oxogl_dehyd_N"/>
    <property type="match status" value="1"/>
</dbReference>
<dbReference type="Pfam" id="PF00676">
    <property type="entry name" value="E1_dh"/>
    <property type="match status" value="1"/>
</dbReference>
<dbReference type="Pfam" id="PF16870">
    <property type="entry name" value="OxoGdeHyase_C"/>
    <property type="match status" value="1"/>
</dbReference>
<dbReference type="Pfam" id="PF02779">
    <property type="entry name" value="Transket_pyr"/>
    <property type="match status" value="1"/>
</dbReference>
<dbReference type="PIRSF" id="PIRSF000157">
    <property type="entry name" value="Oxoglu_dh_E1"/>
    <property type="match status" value="1"/>
</dbReference>
<dbReference type="SMART" id="SM00861">
    <property type="entry name" value="Transket_pyr"/>
    <property type="match status" value="1"/>
</dbReference>
<dbReference type="SUPFAM" id="SSF52518">
    <property type="entry name" value="Thiamin diphosphate-binding fold (THDP-binding)"/>
    <property type="match status" value="2"/>
</dbReference>
<feature type="chain" id="PRO_1000065700" description="2-oxoglutarate dehydrogenase E1 component">
    <location>
        <begin position="1"/>
        <end position="1004"/>
    </location>
</feature>
<reference key="1">
    <citation type="journal article" date="2009" name="PLoS ONE">
        <title>Genome degradation in Brucella ovis corresponds with narrowing of its host range and tissue tropism.</title>
        <authorList>
            <person name="Tsolis R.M."/>
            <person name="Seshadri R."/>
            <person name="Santos R.L."/>
            <person name="Sangari F.J."/>
            <person name="Lobo J.M."/>
            <person name="de Jong M.F."/>
            <person name="Ren Q."/>
            <person name="Myers G."/>
            <person name="Brinkac L.M."/>
            <person name="Nelson W.C."/>
            <person name="Deboy R.T."/>
            <person name="Angiuoli S."/>
            <person name="Khouri H."/>
            <person name="Dimitrov G."/>
            <person name="Robinson J.R."/>
            <person name="Mulligan S."/>
            <person name="Walker R.L."/>
            <person name="Elzer P.E."/>
            <person name="Hassan K.A."/>
            <person name="Paulsen I.T."/>
        </authorList>
    </citation>
    <scope>NUCLEOTIDE SEQUENCE [LARGE SCALE GENOMIC DNA]</scope>
    <source>
        <strain>ATCC 25840 / 63/290 / NCTC 10512</strain>
    </source>
</reference>
<organism>
    <name type="scientific">Brucella ovis (strain ATCC 25840 / 63/290 / NCTC 10512)</name>
    <dbReference type="NCBI Taxonomy" id="444178"/>
    <lineage>
        <taxon>Bacteria</taxon>
        <taxon>Pseudomonadati</taxon>
        <taxon>Pseudomonadota</taxon>
        <taxon>Alphaproteobacteria</taxon>
        <taxon>Hyphomicrobiales</taxon>
        <taxon>Brucellaceae</taxon>
        <taxon>Brucella/Ochrobactrum group</taxon>
        <taxon>Brucella</taxon>
    </lineage>
</organism>